<feature type="chain" id="PRO_0000225838" description="UPF0145 protein Pfl01_1745">
    <location>
        <begin position="1"/>
        <end position="106"/>
    </location>
</feature>
<dbReference type="EMBL" id="CP000094">
    <property type="protein sequence ID" value="ABA73488.1"/>
    <property type="molecule type" value="Genomic_DNA"/>
</dbReference>
<dbReference type="RefSeq" id="WP_007959944.1">
    <property type="nucleotide sequence ID" value="NC_007492.2"/>
</dbReference>
<dbReference type="SMR" id="Q3KFG8"/>
<dbReference type="KEGG" id="pfo:Pfl01_1745"/>
<dbReference type="eggNOG" id="COG0393">
    <property type="taxonomic scope" value="Bacteria"/>
</dbReference>
<dbReference type="HOGENOM" id="CLU_117144_3_2_6"/>
<dbReference type="Proteomes" id="UP000002704">
    <property type="component" value="Chromosome"/>
</dbReference>
<dbReference type="Gene3D" id="3.30.110.70">
    <property type="entry name" value="Hypothetical protein apc22750. Chain B"/>
    <property type="match status" value="1"/>
</dbReference>
<dbReference type="HAMAP" id="MF_00338">
    <property type="entry name" value="UPF0145"/>
    <property type="match status" value="1"/>
</dbReference>
<dbReference type="InterPro" id="IPR035439">
    <property type="entry name" value="UPF0145_dom_sf"/>
</dbReference>
<dbReference type="InterPro" id="IPR002765">
    <property type="entry name" value="UPF0145_YbjQ-like"/>
</dbReference>
<dbReference type="PANTHER" id="PTHR34068">
    <property type="entry name" value="UPF0145 PROTEIN YBJQ"/>
    <property type="match status" value="1"/>
</dbReference>
<dbReference type="PANTHER" id="PTHR34068:SF1">
    <property type="entry name" value="UPF0145 PROTEIN YBJQ"/>
    <property type="match status" value="1"/>
</dbReference>
<dbReference type="Pfam" id="PF01906">
    <property type="entry name" value="YbjQ_1"/>
    <property type="match status" value="1"/>
</dbReference>
<dbReference type="SUPFAM" id="SSF117782">
    <property type="entry name" value="YbjQ-like"/>
    <property type="match status" value="1"/>
</dbReference>
<proteinExistence type="inferred from homology"/>
<evidence type="ECO:0000255" key="1">
    <source>
        <dbReference type="HAMAP-Rule" id="MF_00338"/>
    </source>
</evidence>
<protein>
    <recommendedName>
        <fullName evidence="1">UPF0145 protein Pfl01_1745</fullName>
    </recommendedName>
</protein>
<gene>
    <name type="ordered locus">Pfl01_1745</name>
</gene>
<comment type="similarity">
    <text evidence="1">Belongs to the UPF0145 family.</text>
</comment>
<reference key="1">
    <citation type="journal article" date="2009" name="Genome Biol.">
        <title>Genomic and genetic analyses of diversity and plant interactions of Pseudomonas fluorescens.</title>
        <authorList>
            <person name="Silby M.W."/>
            <person name="Cerdeno-Tarraga A.M."/>
            <person name="Vernikos G.S."/>
            <person name="Giddens S.R."/>
            <person name="Jackson R.W."/>
            <person name="Preston G.M."/>
            <person name="Zhang X.-X."/>
            <person name="Moon C.D."/>
            <person name="Gehrig S.M."/>
            <person name="Godfrey S.A.C."/>
            <person name="Knight C.G."/>
            <person name="Malone J.G."/>
            <person name="Robinson Z."/>
            <person name="Spiers A.J."/>
            <person name="Harris S."/>
            <person name="Challis G.L."/>
            <person name="Yaxley A.M."/>
            <person name="Harris D."/>
            <person name="Seeger K."/>
            <person name="Murphy L."/>
            <person name="Rutter S."/>
            <person name="Squares R."/>
            <person name="Quail M.A."/>
            <person name="Saunders E."/>
            <person name="Mavromatis K."/>
            <person name="Brettin T.S."/>
            <person name="Bentley S.D."/>
            <person name="Hothersall J."/>
            <person name="Stephens E."/>
            <person name="Thomas C.M."/>
            <person name="Parkhill J."/>
            <person name="Levy S.B."/>
            <person name="Rainey P.B."/>
            <person name="Thomson N.R."/>
        </authorList>
    </citation>
    <scope>NUCLEOTIDE SEQUENCE [LARGE SCALE GENOMIC DNA]</scope>
    <source>
        <strain>Pf0-1</strain>
    </source>
</reference>
<name>Y1745_PSEPF</name>
<organism>
    <name type="scientific">Pseudomonas fluorescens (strain Pf0-1)</name>
    <dbReference type="NCBI Taxonomy" id="205922"/>
    <lineage>
        <taxon>Bacteria</taxon>
        <taxon>Pseudomonadati</taxon>
        <taxon>Pseudomonadota</taxon>
        <taxon>Gammaproteobacteria</taxon>
        <taxon>Pseudomonadales</taxon>
        <taxon>Pseudomonadaceae</taxon>
        <taxon>Pseudomonas</taxon>
    </lineage>
</organism>
<accession>Q3KFG8</accession>
<sequence>MIISTTHSIEGRQITAYLDIVSAESVQGVNVIRDMFAGMRDFFGGRSQTLERALKEARVQATDEIKERARALQADAVVGVDFEISMPAGKGGMVVVFATGTAVKLR</sequence>